<evidence type="ECO:0000255" key="1">
    <source>
        <dbReference type="HAMAP-Rule" id="MF_01416"/>
    </source>
</evidence>
<reference key="1">
    <citation type="journal article" date="2007" name="J. Bacteriol.">
        <title>The complete genome sequence of Bacillus thuringiensis Al Hakam.</title>
        <authorList>
            <person name="Challacombe J.F."/>
            <person name="Altherr M.R."/>
            <person name="Xie G."/>
            <person name="Bhotika S.S."/>
            <person name="Brown N."/>
            <person name="Bruce D."/>
            <person name="Campbell C.S."/>
            <person name="Campbell M.L."/>
            <person name="Chen J."/>
            <person name="Chertkov O."/>
            <person name="Cleland C."/>
            <person name="Dimitrijevic M."/>
            <person name="Doggett N.A."/>
            <person name="Fawcett J.J."/>
            <person name="Glavina T."/>
            <person name="Goodwin L.A."/>
            <person name="Green L.D."/>
            <person name="Han C.S."/>
            <person name="Hill K.K."/>
            <person name="Hitchcock P."/>
            <person name="Jackson P.J."/>
            <person name="Keim P."/>
            <person name="Kewalramani A.R."/>
            <person name="Longmire J."/>
            <person name="Lucas S."/>
            <person name="Malfatti S."/>
            <person name="Martinez D."/>
            <person name="McMurry K."/>
            <person name="Meincke L.J."/>
            <person name="Misra M."/>
            <person name="Moseman B.L."/>
            <person name="Mundt M."/>
            <person name="Munk A.C."/>
            <person name="Okinaka R.T."/>
            <person name="Parson-Quintana B."/>
            <person name="Reilly L.P."/>
            <person name="Richardson P."/>
            <person name="Robinson D.L."/>
            <person name="Saunders E."/>
            <person name="Tapia R."/>
            <person name="Tesmer J.G."/>
            <person name="Thayer N."/>
            <person name="Thompson L.S."/>
            <person name="Tice H."/>
            <person name="Ticknor L.O."/>
            <person name="Wills P.L."/>
            <person name="Gilna P."/>
            <person name="Brettin T.S."/>
        </authorList>
    </citation>
    <scope>NUCLEOTIDE SEQUENCE [LARGE SCALE GENOMIC DNA]</scope>
    <source>
        <strain>Al Hakam</strain>
    </source>
</reference>
<comment type="function">
    <text evidence="1">F(1)F(0) ATP synthase produces ATP from ADP in the presence of a proton or sodium gradient. F-type ATPases consist of two structural domains, F(1) containing the extramembraneous catalytic core and F(0) containing the membrane proton channel, linked together by a central stalk and a peripheral stalk. During catalysis, ATP synthesis in the catalytic domain of F(1) is coupled via a rotary mechanism of the central stalk subunits to proton translocation.</text>
</comment>
<comment type="function">
    <text evidence="1">This protein is part of the stalk that links CF(0) to CF(1). It either transmits conformational changes from CF(0) to CF(1) or is implicated in proton conduction.</text>
</comment>
<comment type="subunit">
    <text evidence="1">F-type ATPases have 2 components, F(1) - the catalytic core - and F(0) - the membrane proton channel. F(1) has five subunits: alpha(3), beta(3), gamma(1), delta(1), epsilon(1). F(0) has three main subunits: a(1), b(2) and c(10-14). The alpha and beta chains form an alternating ring which encloses part of the gamma chain. F(1) is attached to F(0) by a central stalk formed by the gamma and epsilon chains, while a peripheral stalk is formed by the delta and b chains.</text>
</comment>
<comment type="subcellular location">
    <subcellularLocation>
        <location evidence="1">Cell membrane</location>
        <topology evidence="1">Peripheral membrane protein</topology>
    </subcellularLocation>
</comment>
<comment type="similarity">
    <text evidence="1">Belongs to the ATPase delta chain family.</text>
</comment>
<feature type="chain" id="PRO_1000184647" description="ATP synthase subunit delta">
    <location>
        <begin position="1"/>
        <end position="180"/>
    </location>
</feature>
<sequence length="180" mass="20487">MSNGIVAKRYAVALFKIAKEKHVLEMFEEELRLVQNVYEKNGELHSFLTQPNISKEQKKTFLANVFGSVSESILNTLYILIDNKRIDILSDIANEYVVLANEERNVADATVYSTRLLSEEEKLNIAEAFAKRTGKDAIRVKNVVDEDLLGGIKVRIGNRIYDGSLQGKLARIQRELMKNR</sequence>
<dbReference type="EMBL" id="CP000485">
    <property type="protein sequence ID" value="ABK87991.1"/>
    <property type="molecule type" value="Genomic_DNA"/>
</dbReference>
<dbReference type="RefSeq" id="WP_000064678.1">
    <property type="nucleotide sequence ID" value="NC_008600.1"/>
</dbReference>
<dbReference type="SMR" id="A0RL98"/>
<dbReference type="GeneID" id="45025138"/>
<dbReference type="KEGG" id="btl:BALH_4811"/>
<dbReference type="HOGENOM" id="CLU_085114_4_1_9"/>
<dbReference type="GO" id="GO:0005886">
    <property type="term" value="C:plasma membrane"/>
    <property type="evidence" value="ECO:0007669"/>
    <property type="project" value="UniProtKB-SubCell"/>
</dbReference>
<dbReference type="GO" id="GO:0045259">
    <property type="term" value="C:proton-transporting ATP synthase complex"/>
    <property type="evidence" value="ECO:0007669"/>
    <property type="project" value="UniProtKB-KW"/>
</dbReference>
<dbReference type="GO" id="GO:0046933">
    <property type="term" value="F:proton-transporting ATP synthase activity, rotational mechanism"/>
    <property type="evidence" value="ECO:0007669"/>
    <property type="project" value="UniProtKB-UniRule"/>
</dbReference>
<dbReference type="Gene3D" id="1.10.520.20">
    <property type="entry name" value="N-terminal domain of the delta subunit of the F1F0-ATP synthase"/>
    <property type="match status" value="1"/>
</dbReference>
<dbReference type="HAMAP" id="MF_01416">
    <property type="entry name" value="ATP_synth_delta_bact"/>
    <property type="match status" value="1"/>
</dbReference>
<dbReference type="InterPro" id="IPR026015">
    <property type="entry name" value="ATP_synth_OSCP/delta_N_sf"/>
</dbReference>
<dbReference type="InterPro" id="IPR020781">
    <property type="entry name" value="ATPase_OSCP/d_CS"/>
</dbReference>
<dbReference type="InterPro" id="IPR000711">
    <property type="entry name" value="ATPase_OSCP/dsu"/>
</dbReference>
<dbReference type="NCBIfam" id="TIGR01145">
    <property type="entry name" value="ATP_synt_delta"/>
    <property type="match status" value="1"/>
</dbReference>
<dbReference type="NCBIfam" id="NF004402">
    <property type="entry name" value="PRK05758.2-2"/>
    <property type="match status" value="1"/>
</dbReference>
<dbReference type="NCBIfam" id="NF004403">
    <property type="entry name" value="PRK05758.2-4"/>
    <property type="match status" value="1"/>
</dbReference>
<dbReference type="PANTHER" id="PTHR11910">
    <property type="entry name" value="ATP SYNTHASE DELTA CHAIN"/>
    <property type="match status" value="1"/>
</dbReference>
<dbReference type="Pfam" id="PF00213">
    <property type="entry name" value="OSCP"/>
    <property type="match status" value="1"/>
</dbReference>
<dbReference type="PRINTS" id="PR00125">
    <property type="entry name" value="ATPASEDELTA"/>
</dbReference>
<dbReference type="SUPFAM" id="SSF47928">
    <property type="entry name" value="N-terminal domain of the delta subunit of the F1F0-ATP synthase"/>
    <property type="match status" value="1"/>
</dbReference>
<dbReference type="PROSITE" id="PS00389">
    <property type="entry name" value="ATPASE_DELTA"/>
    <property type="match status" value="1"/>
</dbReference>
<organism>
    <name type="scientific">Bacillus thuringiensis (strain Al Hakam)</name>
    <dbReference type="NCBI Taxonomy" id="412694"/>
    <lineage>
        <taxon>Bacteria</taxon>
        <taxon>Bacillati</taxon>
        <taxon>Bacillota</taxon>
        <taxon>Bacilli</taxon>
        <taxon>Bacillales</taxon>
        <taxon>Bacillaceae</taxon>
        <taxon>Bacillus</taxon>
        <taxon>Bacillus cereus group</taxon>
    </lineage>
</organism>
<accession>A0RL98</accession>
<gene>
    <name evidence="1" type="primary">atpH</name>
    <name type="ordered locus">BALH_4811</name>
</gene>
<keyword id="KW-0066">ATP synthesis</keyword>
<keyword id="KW-1003">Cell membrane</keyword>
<keyword id="KW-0139">CF(1)</keyword>
<keyword id="KW-0375">Hydrogen ion transport</keyword>
<keyword id="KW-0406">Ion transport</keyword>
<keyword id="KW-0472">Membrane</keyword>
<keyword id="KW-0813">Transport</keyword>
<name>ATPD_BACAH</name>
<proteinExistence type="inferred from homology"/>
<protein>
    <recommendedName>
        <fullName evidence="1">ATP synthase subunit delta</fullName>
    </recommendedName>
    <alternativeName>
        <fullName evidence="1">ATP synthase F(1) sector subunit delta</fullName>
    </alternativeName>
    <alternativeName>
        <fullName evidence="1">F-type ATPase subunit delta</fullName>
        <shortName evidence="1">F-ATPase subunit delta</shortName>
    </alternativeName>
</protein>